<evidence type="ECO:0000255" key="1">
    <source>
        <dbReference type="HAMAP-Rule" id="MF_01697"/>
    </source>
</evidence>
<dbReference type="EC" id="6.3.1.13" evidence="1"/>
<dbReference type="EMBL" id="AP011540">
    <property type="protein sequence ID" value="BAI64861.1"/>
    <property type="molecule type" value="Genomic_DNA"/>
</dbReference>
<dbReference type="SMR" id="D2NT85"/>
<dbReference type="STRING" id="680646.RMDY18_10290"/>
<dbReference type="KEGG" id="rmu:RMDY18_10290"/>
<dbReference type="eggNOG" id="COG0215">
    <property type="taxonomic scope" value="Bacteria"/>
</dbReference>
<dbReference type="HOGENOM" id="CLU_013528_0_0_11"/>
<dbReference type="Proteomes" id="UP000001883">
    <property type="component" value="Chromosome"/>
</dbReference>
<dbReference type="GO" id="GO:0005829">
    <property type="term" value="C:cytosol"/>
    <property type="evidence" value="ECO:0007669"/>
    <property type="project" value="TreeGrafter"/>
</dbReference>
<dbReference type="GO" id="GO:0005524">
    <property type="term" value="F:ATP binding"/>
    <property type="evidence" value="ECO:0007669"/>
    <property type="project" value="UniProtKB-KW"/>
</dbReference>
<dbReference type="GO" id="GO:0035446">
    <property type="term" value="F:cysteine-glucosaminylinositol ligase activity"/>
    <property type="evidence" value="ECO:0007669"/>
    <property type="project" value="UniProtKB-UniRule"/>
</dbReference>
<dbReference type="GO" id="GO:0004817">
    <property type="term" value="F:cysteine-tRNA ligase activity"/>
    <property type="evidence" value="ECO:0007669"/>
    <property type="project" value="TreeGrafter"/>
</dbReference>
<dbReference type="GO" id="GO:0008270">
    <property type="term" value="F:zinc ion binding"/>
    <property type="evidence" value="ECO:0007669"/>
    <property type="project" value="UniProtKB-UniRule"/>
</dbReference>
<dbReference type="GO" id="GO:0006423">
    <property type="term" value="P:cysteinyl-tRNA aminoacylation"/>
    <property type="evidence" value="ECO:0007669"/>
    <property type="project" value="TreeGrafter"/>
</dbReference>
<dbReference type="GO" id="GO:0010125">
    <property type="term" value="P:mycothiol biosynthetic process"/>
    <property type="evidence" value="ECO:0007669"/>
    <property type="project" value="UniProtKB-UniRule"/>
</dbReference>
<dbReference type="Gene3D" id="1.20.120.640">
    <property type="entry name" value="Anticodon-binding domain of a subclass of class I aminoacyl-tRNA synthetases"/>
    <property type="match status" value="1"/>
</dbReference>
<dbReference type="Gene3D" id="3.40.50.620">
    <property type="entry name" value="HUPs"/>
    <property type="match status" value="1"/>
</dbReference>
<dbReference type="HAMAP" id="MF_01697">
    <property type="entry name" value="MshC"/>
    <property type="match status" value="1"/>
</dbReference>
<dbReference type="InterPro" id="IPR024909">
    <property type="entry name" value="Cys-tRNA/MSH_ligase"/>
</dbReference>
<dbReference type="InterPro" id="IPR017812">
    <property type="entry name" value="Mycothiol_ligase_MshC"/>
</dbReference>
<dbReference type="InterPro" id="IPR014729">
    <property type="entry name" value="Rossmann-like_a/b/a_fold"/>
</dbReference>
<dbReference type="InterPro" id="IPR032678">
    <property type="entry name" value="tRNA-synt_1_cat_dom"/>
</dbReference>
<dbReference type="NCBIfam" id="TIGR03447">
    <property type="entry name" value="mycothiol_MshC"/>
    <property type="match status" value="1"/>
</dbReference>
<dbReference type="PANTHER" id="PTHR10890:SF3">
    <property type="entry name" value="CYSTEINE--TRNA LIGASE, CYTOPLASMIC"/>
    <property type="match status" value="1"/>
</dbReference>
<dbReference type="PANTHER" id="PTHR10890">
    <property type="entry name" value="CYSTEINYL-TRNA SYNTHETASE"/>
    <property type="match status" value="1"/>
</dbReference>
<dbReference type="Pfam" id="PF01406">
    <property type="entry name" value="tRNA-synt_1e"/>
    <property type="match status" value="1"/>
</dbReference>
<dbReference type="PRINTS" id="PR00983">
    <property type="entry name" value="TRNASYNTHCYS"/>
</dbReference>
<dbReference type="SUPFAM" id="SSF52374">
    <property type="entry name" value="Nucleotidylyl transferase"/>
    <property type="match status" value="1"/>
</dbReference>
<comment type="function">
    <text evidence="1">Catalyzes the ATP-dependent condensation of GlcN-Ins and L-cysteine to form L-Cys-GlcN-Ins.</text>
</comment>
<comment type="catalytic activity">
    <reaction evidence="1">
        <text>1D-myo-inositol 2-amino-2-deoxy-alpha-D-glucopyranoside + L-cysteine + ATP = 1D-myo-inositol 2-(L-cysteinylamino)-2-deoxy-alpha-D-glucopyranoside + AMP + diphosphate + H(+)</text>
        <dbReference type="Rhea" id="RHEA:26176"/>
        <dbReference type="ChEBI" id="CHEBI:15378"/>
        <dbReference type="ChEBI" id="CHEBI:30616"/>
        <dbReference type="ChEBI" id="CHEBI:33019"/>
        <dbReference type="ChEBI" id="CHEBI:35235"/>
        <dbReference type="ChEBI" id="CHEBI:58886"/>
        <dbReference type="ChEBI" id="CHEBI:58887"/>
        <dbReference type="ChEBI" id="CHEBI:456215"/>
        <dbReference type="EC" id="6.3.1.13"/>
    </reaction>
</comment>
<comment type="cofactor">
    <cofactor evidence="1">
        <name>Zn(2+)</name>
        <dbReference type="ChEBI" id="CHEBI:29105"/>
    </cofactor>
    <text evidence="1">Binds 1 zinc ion per subunit.</text>
</comment>
<comment type="subunit">
    <text evidence="1">Monomer.</text>
</comment>
<comment type="similarity">
    <text evidence="1">Belongs to the class-I aminoacyl-tRNA synthetase family. MshC subfamily.</text>
</comment>
<organism>
    <name type="scientific">Rothia mucilaginosa (strain DY-18)</name>
    <name type="common">Stomatococcus mucilaginosus</name>
    <dbReference type="NCBI Taxonomy" id="680646"/>
    <lineage>
        <taxon>Bacteria</taxon>
        <taxon>Bacillati</taxon>
        <taxon>Actinomycetota</taxon>
        <taxon>Actinomycetes</taxon>
        <taxon>Micrococcales</taxon>
        <taxon>Micrococcaceae</taxon>
        <taxon>Rothia</taxon>
    </lineage>
</organism>
<accession>D2NT85</accession>
<feature type="chain" id="PRO_0000400478" description="L-cysteine:1D-myo-inositol 2-amino-2-deoxy-alpha-D-glucopyranoside ligase">
    <location>
        <begin position="1"/>
        <end position="453"/>
    </location>
</feature>
<feature type="short sequence motif" description="'HIGH' region" evidence="1">
    <location>
        <begin position="60"/>
        <end position="70"/>
    </location>
</feature>
<feature type="short sequence motif" description="'ERGGDP' region" evidence="1">
    <location>
        <begin position="221"/>
        <end position="226"/>
    </location>
</feature>
<feature type="short sequence motif" description="'KMSKS' region" evidence="1">
    <location>
        <begin position="323"/>
        <end position="327"/>
    </location>
</feature>
<feature type="binding site" evidence="1">
    <location>
        <begin position="58"/>
        <end position="61"/>
    </location>
    <ligand>
        <name>L-cysteinyl-5'-AMP</name>
        <dbReference type="ChEBI" id="CHEBI:144924"/>
    </ligand>
</feature>
<feature type="binding site" evidence="1">
    <location>
        <position position="58"/>
    </location>
    <ligand>
        <name>Zn(2+)</name>
        <dbReference type="ChEBI" id="CHEBI:29105"/>
    </ligand>
</feature>
<feature type="binding site" evidence="1">
    <location>
        <position position="73"/>
    </location>
    <ligand>
        <name>L-cysteinyl-5'-AMP</name>
        <dbReference type="ChEBI" id="CHEBI:144924"/>
    </ligand>
</feature>
<feature type="binding site" evidence="1">
    <location>
        <begin position="96"/>
        <end position="98"/>
    </location>
    <ligand>
        <name>L-cysteinyl-5'-AMP</name>
        <dbReference type="ChEBI" id="CHEBI:144924"/>
    </ligand>
</feature>
<feature type="binding site" evidence="1">
    <location>
        <position position="262"/>
    </location>
    <ligand>
        <name>L-cysteinyl-5'-AMP</name>
        <dbReference type="ChEBI" id="CHEBI:144924"/>
    </ligand>
</feature>
<feature type="binding site" evidence="1">
    <location>
        <position position="266"/>
    </location>
    <ligand>
        <name>Zn(2+)</name>
        <dbReference type="ChEBI" id="CHEBI:29105"/>
    </ligand>
</feature>
<feature type="binding site" evidence="1">
    <location>
        <begin position="284"/>
        <end position="286"/>
    </location>
    <ligand>
        <name>L-cysteinyl-5'-AMP</name>
        <dbReference type="ChEBI" id="CHEBI:144924"/>
    </ligand>
</feature>
<feature type="binding site" evidence="1">
    <location>
        <position position="291"/>
    </location>
    <ligand>
        <name>Zn(2+)</name>
        <dbReference type="ChEBI" id="CHEBI:29105"/>
    </ligand>
</feature>
<feature type="binding site" evidence="1">
    <location>
        <position position="317"/>
    </location>
    <ligand>
        <name>L-cysteinyl-5'-AMP</name>
        <dbReference type="ChEBI" id="CHEBI:144924"/>
    </ligand>
</feature>
<keyword id="KW-0067">ATP-binding</keyword>
<keyword id="KW-0436">Ligase</keyword>
<keyword id="KW-0479">Metal-binding</keyword>
<keyword id="KW-0547">Nucleotide-binding</keyword>
<keyword id="KW-1185">Reference proteome</keyword>
<keyword id="KW-0862">Zinc</keyword>
<gene>
    <name evidence="1" type="primary">mshC</name>
    <name type="ordered locus">RMDY18_10290</name>
</gene>
<reference key="1">
    <citation type="submission" date="2009-07" db="EMBL/GenBank/DDBJ databases">
        <title>Complete genome sequence of Rothia mucilaginosa DJ.</title>
        <authorList>
            <person name="Yamane K."/>
            <person name="Nambu T."/>
            <person name="Mashimo C."/>
            <person name="Sugimori C."/>
            <person name="Yamanaka T."/>
            <person name="Leung K."/>
            <person name="Fukushima H."/>
        </authorList>
    </citation>
    <scope>NUCLEOTIDE SEQUENCE [LARGE SCALE GENOMIC DNA]</scope>
    <source>
        <strain>DY-18</strain>
    </source>
</reference>
<name>MSHC_ROTMD</name>
<proteinExistence type="inferred from homology"/>
<protein>
    <recommendedName>
        <fullName evidence="1">L-cysteine:1D-myo-inositol 2-amino-2-deoxy-alpha-D-glucopyranoside ligase</fullName>
        <shortName evidence="1">L-Cys:GlcN-Ins ligase</shortName>
        <ecNumber evidence="1">6.3.1.13</ecNumber>
    </recommendedName>
    <alternativeName>
        <fullName evidence="1">Mycothiol ligase</fullName>
        <shortName evidence="1">MSH ligase</shortName>
    </alternativeName>
</protein>
<sequence length="453" mass="49421">MARPPVVGVFTERKPMRAWDAPASVTLPGQAALPRIFDTAAGEIVQVQEDKAASLYVCGITPYDATHMGHASTYVAFDLLHRAWLDAGVPVTYVQNVTDVDDPLLERATATNVDWRELAEDQTELFRTDMKALNVIPPAHYVGVVESIEWLFPLIEDLFRRGLAYRVPGFTDEQGVVHPDGDVYLDLKAVRELPANAEGYSWAPGEVCHLTRDEMLEIFAERGGDPNRAGKRDALDPLLWRVEREGEPSWDAGELGAGRPGWHIECTMIARRFVDGSLTVQAGGNDLTFPHHDLGAGHSWAVSARPHAKHYAHTGMVGLDGHKMSKSRGNLVLVSRLRAAGEDANAVRLAIMGQHYRSDWFWTDELLEHAKARLDTYRHAVSVAEGREGSEGVTDEAAVELLTTVREALGEDLNAPAALAAVDAWAVKALADTTVGGGALVRDILAARLGVVL</sequence>